<feature type="chain" id="PRO_0000084028" description="Effector protein hopD1">
    <location>
        <begin position="1"/>
        <end position="705"/>
    </location>
</feature>
<feature type="region of interest" description="Disordered" evidence="2">
    <location>
        <begin position="1"/>
        <end position="41"/>
    </location>
</feature>
<feature type="region of interest" description="Disordered" evidence="2">
    <location>
        <begin position="173"/>
        <end position="207"/>
    </location>
</feature>
<feature type="compositionally biased region" description="Polar residues" evidence="2">
    <location>
        <begin position="1"/>
        <end position="11"/>
    </location>
</feature>
<feature type="compositionally biased region" description="Polar residues" evidence="2">
    <location>
        <begin position="28"/>
        <end position="41"/>
    </location>
</feature>
<feature type="compositionally biased region" description="Low complexity" evidence="2">
    <location>
        <begin position="173"/>
        <end position="184"/>
    </location>
</feature>
<comment type="function">
    <text evidence="1">Effector protein involved in non-host recognition.</text>
</comment>
<comment type="subcellular location">
    <subcellularLocation>
        <location evidence="3">Secreted</location>
    </subcellularLocation>
    <text>Secreted via type III secretion system (T3SS).</text>
</comment>
<dbReference type="EMBL" id="AE016853">
    <property type="protein sequence ID" value="AAO54410.1"/>
    <property type="molecule type" value="Genomic_DNA"/>
</dbReference>
<dbReference type="RefSeq" id="NP_790715.1">
    <property type="nucleotide sequence ID" value="NC_004578.1"/>
</dbReference>
<dbReference type="RefSeq" id="WP_011103324.1">
    <property type="nucleotide sequence ID" value="NC_004578.1"/>
</dbReference>
<dbReference type="STRING" id="223283.PSPTO_0876"/>
<dbReference type="GeneID" id="1182505"/>
<dbReference type="KEGG" id="pst:PSPTO_0876"/>
<dbReference type="PATRIC" id="fig|223283.9.peg.888"/>
<dbReference type="eggNOG" id="ENOG502ZCDS">
    <property type="taxonomic scope" value="Bacteria"/>
</dbReference>
<dbReference type="HOGENOM" id="CLU_024569_0_0_6"/>
<dbReference type="OrthoDB" id="9157648at2"/>
<dbReference type="PHI-base" id="PHI:4005"/>
<dbReference type="Proteomes" id="UP000002515">
    <property type="component" value="Chromosome"/>
</dbReference>
<dbReference type="GO" id="GO:0005576">
    <property type="term" value="C:extracellular region"/>
    <property type="evidence" value="ECO:0007669"/>
    <property type="project" value="UniProtKB-SubCell"/>
</dbReference>
<dbReference type="GO" id="GO:0052040">
    <property type="term" value="P:symbiont-mediated perturbation of host programmed cell death"/>
    <property type="evidence" value="ECO:0007669"/>
    <property type="project" value="UniProtKB-KW"/>
</dbReference>
<dbReference type="InterPro" id="IPR053430">
    <property type="entry name" value="Plant_immune_effector"/>
</dbReference>
<dbReference type="NCBIfam" id="NF041309">
    <property type="entry name" value="XopB"/>
    <property type="match status" value="1"/>
</dbReference>
<accession>Q888Y8</accession>
<sequence length="705" mass="74955">MNPLRSIQHNIATPPISGGQPLDAVGPQAQQSHPKRISPSQLSQSAHQALERLSANAEHQRLASLVRNALQDGTFQFQSSNHTQVTYKASICLPADTDTVRTDHLINNELTVQARLNDQSEYDIVSAHLHGSSKAISFDVPSPPPAHGSASSVLSERTHLGMSRVLSQDAVDSSSLETPLLSSPDHSRPPSQPKPVHIGSVRRDSGSLVSDNPVVQALLSFAQADQAFPPQAASIAGVQLEMRPRRDIEKALEEFKGAFTVVKAQLMSGANSSERVDEDVNADIHIPLLLKAIERGAAAFGPNASIGQNSAKAFLASCAPKITSNDDVLSEFINQKLKGDDDLQVRLGAQELLHVATKKEFQLGGLAGSIGVSSILGSAWELGASELLKNAIFGKNFSPSQYALQLAGIDSVPPLIIESMDTMCVLAIIKGMKGEEWSMSDLLPKALKAGAISSVVSFPNNVLQYAGFKSRVGDLAANSVTTEAAIFGAASGIPPEVKESEELMRAGLFQSMKDGVMAHSGEGVDTKKTIERMTRHALDIAPGESTAVKSMGLASIVGMIPLIASNKATGLLSEQVLRIFRSAVFNPIEAIALNALALGGRVNVPGLFDSDNAKHARVVQTILARASQHMEAGDRDISAEELHQMLAPRSEFLRHVGSAIVNGMNASFEAIPALVRKLGYGEAPLAERIPYQDLAVPDTSRQPAP</sequence>
<protein>
    <recommendedName>
        <fullName>Effector protein hopD1</fullName>
    </recommendedName>
    <alternativeName>
        <fullName>Hrp-dependent outer protein D1</fullName>
    </alternativeName>
</protein>
<reference key="1">
    <citation type="journal article" date="2003" name="Proc. Natl. Acad. Sci. U.S.A.">
        <title>The complete genome sequence of the Arabidopsis and tomato pathogen Pseudomonas syringae pv. tomato DC3000.</title>
        <authorList>
            <person name="Buell C.R."/>
            <person name="Joardar V."/>
            <person name="Lindeberg M."/>
            <person name="Selengut J."/>
            <person name="Paulsen I.T."/>
            <person name="Gwinn M.L."/>
            <person name="Dodson R.J."/>
            <person name="DeBoy R.T."/>
            <person name="Durkin A.S."/>
            <person name="Kolonay J.F."/>
            <person name="Madupu R."/>
            <person name="Daugherty S.C."/>
            <person name="Brinkac L.M."/>
            <person name="Beanan M.J."/>
            <person name="Haft D.H."/>
            <person name="Nelson W.C."/>
            <person name="Davidsen T.M."/>
            <person name="Zafar N."/>
            <person name="Zhou L."/>
            <person name="Liu J."/>
            <person name="Yuan Q."/>
            <person name="Khouri H.M."/>
            <person name="Fedorova N.B."/>
            <person name="Tran B."/>
            <person name="Russell D."/>
            <person name="Berry K.J."/>
            <person name="Utterback T.R."/>
            <person name="Van Aken S.E."/>
            <person name="Feldblyum T.V."/>
            <person name="D'Ascenzo M."/>
            <person name="Deng W.-L."/>
            <person name="Ramos A.R."/>
            <person name="Alfano J.R."/>
            <person name="Cartinhour S."/>
            <person name="Chatterjee A.K."/>
            <person name="Delaney T.P."/>
            <person name="Lazarowitz S.G."/>
            <person name="Martin G.B."/>
            <person name="Schneider D.J."/>
            <person name="Tang X."/>
            <person name="Bender C.L."/>
            <person name="White O."/>
            <person name="Fraser C.M."/>
            <person name="Collmer A."/>
        </authorList>
    </citation>
    <scope>NUCLEOTIDE SEQUENCE [LARGE SCALE GENOMIC DNA]</scope>
    <source>
        <strain>ATCC BAA-871 / DC3000</strain>
    </source>
</reference>
<reference key="2">
    <citation type="journal article" date="2002" name="Proc. Natl. Acad. Sci. U.S.A.">
        <title>Genomewide identification of proteins secreted by the Hrp type III protein secretion system of Pseudomonas syringae pv. tomato DC3000.</title>
        <authorList>
            <person name="Petnicki-Ocwieja T."/>
            <person name="Schneider D.J."/>
            <person name="Tam V.C."/>
            <person name="Chancey S.T."/>
            <person name="Shan L."/>
            <person name="Jamir Y."/>
            <person name="Schechter L.M."/>
            <person name="Janes M.D."/>
            <person name="Buell C.R."/>
            <person name="Tang X."/>
            <person name="Collmer A."/>
            <person name="Alfano J.R."/>
        </authorList>
    </citation>
    <scope>SUBCELLULAR LOCATION</scope>
    <source>
        <strain>ATCC BAA-871 / DC3000</strain>
    </source>
</reference>
<proteinExistence type="inferred from homology"/>
<name>HOPD1_PSESM</name>
<keyword id="KW-0928">Hypersensitive response elicitation</keyword>
<keyword id="KW-1185">Reference proteome</keyword>
<keyword id="KW-0964">Secreted</keyword>
<keyword id="KW-0843">Virulence</keyword>
<gene>
    <name type="primary">hopD1</name>
    <name type="synonym">avrPphD1pto</name>
    <name type="synonym">hopPtoD1</name>
    <name type="ordered locus">PSPTO_0876</name>
</gene>
<organism>
    <name type="scientific">Pseudomonas syringae pv. tomato (strain ATCC BAA-871 / DC3000)</name>
    <dbReference type="NCBI Taxonomy" id="223283"/>
    <lineage>
        <taxon>Bacteria</taxon>
        <taxon>Pseudomonadati</taxon>
        <taxon>Pseudomonadota</taxon>
        <taxon>Gammaproteobacteria</taxon>
        <taxon>Pseudomonadales</taxon>
        <taxon>Pseudomonadaceae</taxon>
        <taxon>Pseudomonas</taxon>
    </lineage>
</organism>
<evidence type="ECO:0000250" key="1"/>
<evidence type="ECO:0000256" key="2">
    <source>
        <dbReference type="SAM" id="MobiDB-lite"/>
    </source>
</evidence>
<evidence type="ECO:0000269" key="3">
    <source>
    </source>
</evidence>